<accession>P34171</accession>
<accession>Q17225</accession>
<reference key="1">
    <citation type="journal article" date="1996" name="Insect Biochem. Mol. Biol.">
        <title>Binding proteins from the antennae of Bombyx mori.</title>
        <authorList>
            <person name="Krieger J."/>
            <person name="von Nickisch-Rosenegk E."/>
            <person name="Mameli M."/>
            <person name="Pelosi P."/>
            <person name="Breer H."/>
        </authorList>
    </citation>
    <scope>NUCLEOTIDE SEQUENCE [MRNA]</scope>
    <scope>TISSUE SPECIFICITY</scope>
    <source>
        <tissue>Antenna</tissue>
    </source>
</reference>
<reference key="2">
    <citation type="journal article" date="1991" name="J. Neurobiol.">
        <title>Odorant-binding-protein subfamilies associate with distinct classes of olfactory receptor neurons in insects.</title>
        <authorList>
            <person name="Vogt R.G."/>
            <person name="Prestwich G.D."/>
            <person name="Lerner M.R."/>
        </authorList>
    </citation>
    <scope>PROTEIN SEQUENCE OF 19-164</scope>
    <source>
        <tissue>Antenna</tissue>
    </source>
</reference>
<comment type="function">
    <text>Present in the aqueous fluid surrounding olfactory sensory dendrites and are thought to aid in the capture and transport of hydrophobic odorants into and through this fluid.</text>
</comment>
<comment type="subunit">
    <text evidence="4">Homodimer.</text>
</comment>
<comment type="tissue specificity">
    <text evidence="3">Antenna.</text>
</comment>
<comment type="similarity">
    <text evidence="4">Belongs to the PBP/GOBP family.</text>
</comment>
<name>OBP1_BOMMO</name>
<sequence length="164" mass="19150">MWKLVVVLTVNLLQGALTDVYVMKDVTLGFGQALEQCREESQLTEEKMEEFFHFWNDDFKFEHRELGCAIQCMSRHFNLLTDSSRMHHENTDKFIKSFPNGEILSQKMIDMIHTCEKTFDSEPDHCWRILRVAECFKDACNKSGLAPSMELILAEFIMESEADK</sequence>
<protein>
    <recommendedName>
        <fullName>General odorant-binding protein 1</fullName>
        <shortName>GOBP1</shortName>
    </recommendedName>
</protein>
<organism>
    <name type="scientific">Bombyx mori</name>
    <name type="common">Silk moth</name>
    <dbReference type="NCBI Taxonomy" id="7091"/>
    <lineage>
        <taxon>Eukaryota</taxon>
        <taxon>Metazoa</taxon>
        <taxon>Ecdysozoa</taxon>
        <taxon>Arthropoda</taxon>
        <taxon>Hexapoda</taxon>
        <taxon>Insecta</taxon>
        <taxon>Pterygota</taxon>
        <taxon>Neoptera</taxon>
        <taxon>Endopterygota</taxon>
        <taxon>Lepidoptera</taxon>
        <taxon>Glossata</taxon>
        <taxon>Ditrysia</taxon>
        <taxon>Bombycoidea</taxon>
        <taxon>Bombycidae</taxon>
        <taxon>Bombycinae</taxon>
        <taxon>Bombyx</taxon>
    </lineage>
</organism>
<keyword id="KW-0903">Direct protein sequencing</keyword>
<keyword id="KW-1015">Disulfide bond</keyword>
<keyword id="KW-0552">Olfaction</keyword>
<keyword id="KW-1185">Reference proteome</keyword>
<keyword id="KW-0716">Sensory transduction</keyword>
<keyword id="KW-0732">Signal</keyword>
<keyword id="KW-0813">Transport</keyword>
<dbReference type="EMBL" id="X94988">
    <property type="protein sequence ID" value="CAA64444.1"/>
    <property type="molecule type" value="mRNA"/>
</dbReference>
<dbReference type="RefSeq" id="NP_001037496.1">
    <property type="nucleotide sequence ID" value="NM_001044031.1"/>
</dbReference>
<dbReference type="SMR" id="P34171"/>
<dbReference type="FunCoup" id="P34171">
    <property type="interactions" value="35"/>
</dbReference>
<dbReference type="STRING" id="7091.P34171"/>
<dbReference type="PaxDb" id="7091-BGIBMGA012611-TA"/>
<dbReference type="EnsemblMetazoa" id="NM_001044031.1">
    <property type="protein sequence ID" value="NP_001037496.1"/>
    <property type="gene ID" value="GeneID_693051"/>
</dbReference>
<dbReference type="GeneID" id="693051"/>
<dbReference type="KEGG" id="bmor:693051"/>
<dbReference type="CTD" id="693051"/>
<dbReference type="eggNOG" id="ENOG502TBNR">
    <property type="taxonomic scope" value="Eukaryota"/>
</dbReference>
<dbReference type="HOGENOM" id="CLU_1827210_0_0_1"/>
<dbReference type="InParanoid" id="P34171"/>
<dbReference type="OrthoDB" id="494413at7088"/>
<dbReference type="Proteomes" id="UP000005204">
    <property type="component" value="Unassembled WGS sequence"/>
</dbReference>
<dbReference type="GO" id="GO:0005549">
    <property type="term" value="F:odorant binding"/>
    <property type="evidence" value="ECO:0007669"/>
    <property type="project" value="InterPro"/>
</dbReference>
<dbReference type="GO" id="GO:0007608">
    <property type="term" value="P:sensory perception of smell"/>
    <property type="evidence" value="ECO:0007669"/>
    <property type="project" value="UniProtKB-KW"/>
</dbReference>
<dbReference type="CDD" id="cd23992">
    <property type="entry name" value="PBP_GOBP"/>
    <property type="match status" value="1"/>
</dbReference>
<dbReference type="Gene3D" id="1.10.238.20">
    <property type="entry name" value="Pheromone/general odorant binding protein domain"/>
    <property type="match status" value="1"/>
</dbReference>
<dbReference type="InterPro" id="IPR006072">
    <property type="entry name" value="Odorant/phero-bd_Lep"/>
</dbReference>
<dbReference type="InterPro" id="IPR006170">
    <property type="entry name" value="PBP/GOBP"/>
</dbReference>
<dbReference type="InterPro" id="IPR036728">
    <property type="entry name" value="PBP_GOBP_sf"/>
</dbReference>
<dbReference type="Pfam" id="PF01395">
    <property type="entry name" value="PBP_GOBP"/>
    <property type="match status" value="1"/>
</dbReference>
<dbReference type="PIRSF" id="PIRSF015604">
    <property type="entry name" value="Odorant/phero_bd"/>
    <property type="match status" value="1"/>
</dbReference>
<dbReference type="PRINTS" id="PR00484">
    <property type="entry name" value="PBPGOBP"/>
</dbReference>
<dbReference type="SMART" id="SM00708">
    <property type="entry name" value="PhBP"/>
    <property type="match status" value="1"/>
</dbReference>
<dbReference type="SUPFAM" id="SSF47565">
    <property type="entry name" value="Insect pheromone/odorant-binding proteins"/>
    <property type="match status" value="1"/>
</dbReference>
<proteinExistence type="evidence at protein level"/>
<evidence type="ECO:0000250" key="1"/>
<evidence type="ECO:0000269" key="2">
    <source>
    </source>
</evidence>
<evidence type="ECO:0000269" key="3">
    <source>
    </source>
</evidence>
<evidence type="ECO:0000305" key="4"/>
<feature type="signal peptide" evidence="2">
    <location>
        <begin position="1"/>
        <end position="18"/>
    </location>
</feature>
<feature type="chain" id="PRO_0000012567" description="General odorant-binding protein 1">
    <location>
        <begin position="19"/>
        <end position="164"/>
    </location>
</feature>
<feature type="disulfide bond" evidence="1">
    <location>
        <begin position="37"/>
        <end position="72"/>
    </location>
</feature>
<feature type="disulfide bond" evidence="1">
    <location>
        <begin position="68"/>
        <end position="126"/>
    </location>
</feature>
<feature type="disulfide bond" evidence="1">
    <location>
        <begin position="115"/>
        <end position="135"/>
    </location>
</feature>